<feature type="chain" id="PRO_1000140172" description="Anhydro-N-acetylmuramic acid kinase">
    <location>
        <begin position="1"/>
        <end position="373"/>
    </location>
</feature>
<feature type="binding site" evidence="1">
    <location>
        <begin position="12"/>
        <end position="19"/>
    </location>
    <ligand>
        <name>ATP</name>
        <dbReference type="ChEBI" id="CHEBI:30616"/>
    </ligand>
</feature>
<comment type="function">
    <text evidence="1">Catalyzes the specific phosphorylation of 1,6-anhydro-N-acetylmuramic acid (anhMurNAc) with the simultaneous cleavage of the 1,6-anhydro ring, generating MurNAc-6-P. Is required for the utilization of anhMurNAc either imported from the medium or derived from its own cell wall murein, and thus plays a role in cell wall recycling.</text>
</comment>
<comment type="catalytic activity">
    <reaction evidence="1">
        <text>1,6-anhydro-N-acetyl-beta-muramate + ATP + H2O = N-acetyl-D-muramate 6-phosphate + ADP + H(+)</text>
        <dbReference type="Rhea" id="RHEA:24952"/>
        <dbReference type="ChEBI" id="CHEBI:15377"/>
        <dbReference type="ChEBI" id="CHEBI:15378"/>
        <dbReference type="ChEBI" id="CHEBI:30616"/>
        <dbReference type="ChEBI" id="CHEBI:58690"/>
        <dbReference type="ChEBI" id="CHEBI:58722"/>
        <dbReference type="ChEBI" id="CHEBI:456216"/>
        <dbReference type="EC" id="2.7.1.170"/>
    </reaction>
</comment>
<comment type="pathway">
    <text evidence="1">Amino-sugar metabolism; 1,6-anhydro-N-acetylmuramate degradation.</text>
</comment>
<comment type="pathway">
    <text evidence="1">Cell wall biogenesis; peptidoglycan recycling.</text>
</comment>
<comment type="similarity">
    <text evidence="1">Belongs to the anhydro-N-acetylmuramic acid kinase family.</text>
</comment>
<name>ANMK_SALNS</name>
<reference key="1">
    <citation type="journal article" date="2011" name="J. Bacteriol.">
        <title>Comparative genomics of 28 Salmonella enterica isolates: evidence for CRISPR-mediated adaptive sublineage evolution.</title>
        <authorList>
            <person name="Fricke W.F."/>
            <person name="Mammel M.K."/>
            <person name="McDermott P.F."/>
            <person name="Tartera C."/>
            <person name="White D.G."/>
            <person name="Leclerc J.E."/>
            <person name="Ravel J."/>
            <person name="Cebula T.A."/>
        </authorList>
    </citation>
    <scope>NUCLEOTIDE SEQUENCE [LARGE SCALE GENOMIC DNA]</scope>
    <source>
        <strain>SL254</strain>
    </source>
</reference>
<organism>
    <name type="scientific">Salmonella newport (strain SL254)</name>
    <dbReference type="NCBI Taxonomy" id="423368"/>
    <lineage>
        <taxon>Bacteria</taxon>
        <taxon>Pseudomonadati</taxon>
        <taxon>Pseudomonadota</taxon>
        <taxon>Gammaproteobacteria</taxon>
        <taxon>Enterobacterales</taxon>
        <taxon>Enterobacteriaceae</taxon>
        <taxon>Salmonella</taxon>
    </lineage>
</organism>
<keyword id="KW-0067">ATP-binding</keyword>
<keyword id="KW-0119">Carbohydrate metabolism</keyword>
<keyword id="KW-0418">Kinase</keyword>
<keyword id="KW-0547">Nucleotide-binding</keyword>
<keyword id="KW-0808">Transferase</keyword>
<dbReference type="EC" id="2.7.1.170" evidence="1"/>
<dbReference type="EMBL" id="CP001113">
    <property type="protein sequence ID" value="ACF64740.1"/>
    <property type="molecule type" value="Genomic_DNA"/>
</dbReference>
<dbReference type="RefSeq" id="WP_000835028.1">
    <property type="nucleotide sequence ID" value="NZ_CCMR01000003.1"/>
</dbReference>
<dbReference type="SMR" id="B4T583"/>
<dbReference type="KEGG" id="see:SNSL254_A1556"/>
<dbReference type="HOGENOM" id="CLU_038782_0_0_6"/>
<dbReference type="UniPathway" id="UPA00343"/>
<dbReference type="UniPathway" id="UPA00544"/>
<dbReference type="Proteomes" id="UP000008824">
    <property type="component" value="Chromosome"/>
</dbReference>
<dbReference type="GO" id="GO:0005524">
    <property type="term" value="F:ATP binding"/>
    <property type="evidence" value="ECO:0007669"/>
    <property type="project" value="UniProtKB-UniRule"/>
</dbReference>
<dbReference type="GO" id="GO:0016301">
    <property type="term" value="F:kinase activity"/>
    <property type="evidence" value="ECO:0007669"/>
    <property type="project" value="UniProtKB-KW"/>
</dbReference>
<dbReference type="GO" id="GO:0016773">
    <property type="term" value="F:phosphotransferase activity, alcohol group as acceptor"/>
    <property type="evidence" value="ECO:0007669"/>
    <property type="project" value="UniProtKB-UniRule"/>
</dbReference>
<dbReference type="GO" id="GO:0097175">
    <property type="term" value="P:1,6-anhydro-N-acetyl-beta-muramic acid catabolic process"/>
    <property type="evidence" value="ECO:0007669"/>
    <property type="project" value="UniProtKB-UniRule"/>
</dbReference>
<dbReference type="GO" id="GO:0006040">
    <property type="term" value="P:amino sugar metabolic process"/>
    <property type="evidence" value="ECO:0007669"/>
    <property type="project" value="InterPro"/>
</dbReference>
<dbReference type="GO" id="GO:0009254">
    <property type="term" value="P:peptidoglycan turnover"/>
    <property type="evidence" value="ECO:0007669"/>
    <property type="project" value="UniProtKB-UniRule"/>
</dbReference>
<dbReference type="CDD" id="cd24050">
    <property type="entry name" value="ASKHA_NBD_ANMK"/>
    <property type="match status" value="1"/>
</dbReference>
<dbReference type="Gene3D" id="3.30.420.40">
    <property type="match status" value="2"/>
</dbReference>
<dbReference type="HAMAP" id="MF_01270">
    <property type="entry name" value="AnhMurNAc_kinase"/>
    <property type="match status" value="1"/>
</dbReference>
<dbReference type="InterPro" id="IPR005338">
    <property type="entry name" value="Anhydro_N_Ac-Mur_kinase"/>
</dbReference>
<dbReference type="InterPro" id="IPR043129">
    <property type="entry name" value="ATPase_NBD"/>
</dbReference>
<dbReference type="NCBIfam" id="NF007138">
    <property type="entry name" value="PRK09585.1-1"/>
    <property type="match status" value="1"/>
</dbReference>
<dbReference type="NCBIfam" id="NF007139">
    <property type="entry name" value="PRK09585.1-3"/>
    <property type="match status" value="1"/>
</dbReference>
<dbReference type="NCBIfam" id="NF007148">
    <property type="entry name" value="PRK09585.3-2"/>
    <property type="match status" value="1"/>
</dbReference>
<dbReference type="PANTHER" id="PTHR30605">
    <property type="entry name" value="ANHYDRO-N-ACETYLMURAMIC ACID KINASE"/>
    <property type="match status" value="1"/>
</dbReference>
<dbReference type="PANTHER" id="PTHR30605:SF0">
    <property type="entry name" value="ANHYDRO-N-ACETYLMURAMIC ACID KINASE"/>
    <property type="match status" value="1"/>
</dbReference>
<dbReference type="Pfam" id="PF03702">
    <property type="entry name" value="AnmK"/>
    <property type="match status" value="1"/>
</dbReference>
<dbReference type="SUPFAM" id="SSF53067">
    <property type="entry name" value="Actin-like ATPase domain"/>
    <property type="match status" value="1"/>
</dbReference>
<evidence type="ECO:0000255" key="1">
    <source>
        <dbReference type="HAMAP-Rule" id="MF_01270"/>
    </source>
</evidence>
<protein>
    <recommendedName>
        <fullName evidence="1">Anhydro-N-acetylmuramic acid kinase</fullName>
        <ecNumber evidence="1">2.7.1.170</ecNumber>
    </recommendedName>
    <alternativeName>
        <fullName evidence="1">AnhMurNAc kinase</fullName>
    </alternativeName>
</protein>
<accession>B4T583</accession>
<gene>
    <name evidence="1" type="primary">anmK</name>
    <name type="ordered locus">SNSL254_A1556</name>
</gene>
<sequence>MKSGRFIGVMSGTSLDGVDVVLAAIDETMVAQQASLTWPIPVHLKKGILDICQGQPLTLSQLGQLDTQLGRLFAQAVNALLARQRLQPRDIVAIGCHGQTVWHEPTGEAPHTLQIGDNNHIVAHTGITVVGDFRRRDIALGGQGAPLVPAFHHALLGHPTEKRMVLNIGGIANLSLLFPGQAVRGYDTGPGNMLMDAWIWRQCAQPYDKDAAWAKEGQVILPLLQKMLRDPYFAASAPKSTGREYFNYGWLERHLTAFPGADARDVQATLAELTAVSIAQQVLLNGGCERLMVCGGGSRNPLVMARLAALLPGIEVSTTDKAGISGDDMEALAFAWLAWRTLAGLPGNLPSVTGATEASVLGAIYPANPITQS</sequence>
<proteinExistence type="inferred from homology"/>